<gene>
    <name evidence="1" type="primary">xylA</name>
    <name type="ordered locus">GK1875</name>
</gene>
<comment type="catalytic activity">
    <reaction evidence="1">
        <text>alpha-D-xylose = alpha-D-xylulofuranose</text>
        <dbReference type="Rhea" id="RHEA:22816"/>
        <dbReference type="ChEBI" id="CHEBI:28518"/>
        <dbReference type="ChEBI" id="CHEBI:188998"/>
        <dbReference type="EC" id="5.3.1.5"/>
    </reaction>
</comment>
<comment type="cofactor">
    <cofactor evidence="1">
        <name>Mg(2+)</name>
        <dbReference type="ChEBI" id="CHEBI:18420"/>
    </cofactor>
    <text evidence="1">Binds 2 magnesium ions per subunit.</text>
</comment>
<comment type="subunit">
    <text evidence="1">Homotetramer.</text>
</comment>
<comment type="subcellular location">
    <subcellularLocation>
        <location evidence="1">Cytoplasm</location>
    </subcellularLocation>
</comment>
<comment type="similarity">
    <text evidence="1">Belongs to the xylose isomerase family.</text>
</comment>
<dbReference type="EC" id="5.3.1.5" evidence="1"/>
<dbReference type="EMBL" id="BA000043">
    <property type="protein sequence ID" value="BAD76160.1"/>
    <property type="molecule type" value="Genomic_DNA"/>
</dbReference>
<dbReference type="RefSeq" id="WP_011231365.1">
    <property type="nucleotide sequence ID" value="NC_006510.1"/>
</dbReference>
<dbReference type="SMR" id="Q5KYS6"/>
<dbReference type="STRING" id="235909.GK1875"/>
<dbReference type="KEGG" id="gka:GK1875"/>
<dbReference type="PATRIC" id="fig|235909.7.peg.2010"/>
<dbReference type="eggNOG" id="COG2115">
    <property type="taxonomic scope" value="Bacteria"/>
</dbReference>
<dbReference type="HOGENOM" id="CLU_037261_1_0_9"/>
<dbReference type="Proteomes" id="UP000001172">
    <property type="component" value="Chromosome"/>
</dbReference>
<dbReference type="GO" id="GO:0005737">
    <property type="term" value="C:cytoplasm"/>
    <property type="evidence" value="ECO:0007669"/>
    <property type="project" value="UniProtKB-SubCell"/>
</dbReference>
<dbReference type="GO" id="GO:0000287">
    <property type="term" value="F:magnesium ion binding"/>
    <property type="evidence" value="ECO:0007669"/>
    <property type="project" value="UniProtKB-UniRule"/>
</dbReference>
<dbReference type="GO" id="GO:0009045">
    <property type="term" value="F:xylose isomerase activity"/>
    <property type="evidence" value="ECO:0007669"/>
    <property type="project" value="UniProtKB-UniRule"/>
</dbReference>
<dbReference type="GO" id="GO:0042732">
    <property type="term" value="P:D-xylose metabolic process"/>
    <property type="evidence" value="ECO:0007669"/>
    <property type="project" value="UniProtKB-UniRule"/>
</dbReference>
<dbReference type="FunFam" id="3.20.20.150:FF:000002">
    <property type="entry name" value="Xylose isomerase"/>
    <property type="match status" value="1"/>
</dbReference>
<dbReference type="Gene3D" id="3.20.20.150">
    <property type="entry name" value="Divalent-metal-dependent TIM barrel enzymes"/>
    <property type="match status" value="1"/>
</dbReference>
<dbReference type="HAMAP" id="MF_00455">
    <property type="entry name" value="Xylose_isom_A"/>
    <property type="match status" value="1"/>
</dbReference>
<dbReference type="InterPro" id="IPR036237">
    <property type="entry name" value="Xyl_isomerase-like_sf"/>
</dbReference>
<dbReference type="InterPro" id="IPR013022">
    <property type="entry name" value="Xyl_isomerase-like_TIM-brl"/>
</dbReference>
<dbReference type="InterPro" id="IPR013452">
    <property type="entry name" value="Xylose_isom_bac"/>
</dbReference>
<dbReference type="InterPro" id="IPR001998">
    <property type="entry name" value="Xylose_isomerase"/>
</dbReference>
<dbReference type="NCBIfam" id="NF003998">
    <property type="entry name" value="PRK05474.1"/>
    <property type="match status" value="1"/>
</dbReference>
<dbReference type="NCBIfam" id="TIGR02630">
    <property type="entry name" value="xylose_isom_A"/>
    <property type="match status" value="1"/>
</dbReference>
<dbReference type="PANTHER" id="PTHR48408">
    <property type="match status" value="1"/>
</dbReference>
<dbReference type="PANTHER" id="PTHR48408:SF1">
    <property type="entry name" value="XYLOSE ISOMERASE"/>
    <property type="match status" value="1"/>
</dbReference>
<dbReference type="Pfam" id="PF01261">
    <property type="entry name" value="AP_endonuc_2"/>
    <property type="match status" value="1"/>
</dbReference>
<dbReference type="PRINTS" id="PR00688">
    <property type="entry name" value="XYLOSISMRASE"/>
</dbReference>
<dbReference type="SUPFAM" id="SSF51658">
    <property type="entry name" value="Xylose isomerase-like"/>
    <property type="match status" value="1"/>
</dbReference>
<dbReference type="PROSITE" id="PS51415">
    <property type="entry name" value="XYLOSE_ISOMERASE"/>
    <property type="match status" value="1"/>
</dbReference>
<feature type="chain" id="PRO_0000236962" description="Xylose isomerase">
    <location>
        <begin position="1"/>
        <end position="445"/>
    </location>
</feature>
<feature type="active site" evidence="1">
    <location>
        <position position="99"/>
    </location>
</feature>
<feature type="active site" evidence="1">
    <location>
        <position position="102"/>
    </location>
</feature>
<feature type="binding site" evidence="1">
    <location>
        <position position="230"/>
    </location>
    <ligand>
        <name>Mg(2+)</name>
        <dbReference type="ChEBI" id="CHEBI:18420"/>
        <label>1</label>
    </ligand>
</feature>
<feature type="binding site" evidence="1">
    <location>
        <position position="266"/>
    </location>
    <ligand>
        <name>Mg(2+)</name>
        <dbReference type="ChEBI" id="CHEBI:18420"/>
        <label>1</label>
    </ligand>
</feature>
<feature type="binding site" evidence="1">
    <location>
        <position position="266"/>
    </location>
    <ligand>
        <name>Mg(2+)</name>
        <dbReference type="ChEBI" id="CHEBI:18420"/>
        <label>2</label>
    </ligand>
</feature>
<feature type="binding site" evidence="1">
    <location>
        <position position="269"/>
    </location>
    <ligand>
        <name>Mg(2+)</name>
        <dbReference type="ChEBI" id="CHEBI:18420"/>
        <label>2</label>
    </ligand>
</feature>
<feature type="binding site" evidence="1">
    <location>
        <position position="294"/>
    </location>
    <ligand>
        <name>Mg(2+)</name>
        <dbReference type="ChEBI" id="CHEBI:18420"/>
        <label>1</label>
    </ligand>
</feature>
<feature type="binding site" evidence="1">
    <location>
        <position position="305"/>
    </location>
    <ligand>
        <name>Mg(2+)</name>
        <dbReference type="ChEBI" id="CHEBI:18420"/>
        <label>2</label>
    </ligand>
</feature>
<feature type="binding site" evidence="1">
    <location>
        <position position="307"/>
    </location>
    <ligand>
        <name>Mg(2+)</name>
        <dbReference type="ChEBI" id="CHEBI:18420"/>
        <label>2</label>
    </ligand>
</feature>
<feature type="binding site" evidence="1">
    <location>
        <position position="337"/>
    </location>
    <ligand>
        <name>Mg(2+)</name>
        <dbReference type="ChEBI" id="CHEBI:18420"/>
        <label>1</label>
    </ligand>
</feature>
<sequence>MAYFPNIGTIPYEGPESRNPLAFKFYNPDEKVGGKTMEEHLRFSVAYWHTFTGDGSDPFGVGNMIRPWNTYSGMDLAKARVEAAFELFEKLNVPFFCFHDVDIAPEGETLSETYKNLDEIVDMIEEYMKTSKTKLLWNTANLFSHPRFVHGAATSCNADVFAYAAAKVKKGLEIAKRLGAENYVFWGGREGYETLLNTDMKLELDNLARFLHMAVDYAKEIGFDGQFLIEPKPKEPTKHQYDFDVATALAFLQTYGLKDHFKFNIEANHATLAGHTFEHELRVARIHGMLGSVDANQGDTLLGWDTDEFPTDLYTTTLAMYEILQNGGLGRGGLNFDAKVRRGSFEPEDLFYAHIAGMDSFAIGLKVAHRLLEDRVFEQFIEERYKSYTEGIGREIVEGTADFKKLEEYALQLGDIRNTSGRLERLKTLLNQYLLEVSAPSGSRS</sequence>
<reference key="1">
    <citation type="journal article" date="2004" name="Nucleic Acids Res.">
        <title>Thermoadaptation trait revealed by the genome sequence of thermophilic Geobacillus kaustophilus.</title>
        <authorList>
            <person name="Takami H."/>
            <person name="Takaki Y."/>
            <person name="Chee G.-J."/>
            <person name="Nishi S."/>
            <person name="Shimamura S."/>
            <person name="Suzuki H."/>
            <person name="Matsui S."/>
            <person name="Uchiyama I."/>
        </authorList>
    </citation>
    <scope>NUCLEOTIDE SEQUENCE [LARGE SCALE GENOMIC DNA]</scope>
    <source>
        <strain>HTA426</strain>
    </source>
</reference>
<evidence type="ECO:0000255" key="1">
    <source>
        <dbReference type="HAMAP-Rule" id="MF_00455"/>
    </source>
</evidence>
<keyword id="KW-0119">Carbohydrate metabolism</keyword>
<keyword id="KW-0963">Cytoplasm</keyword>
<keyword id="KW-0413">Isomerase</keyword>
<keyword id="KW-0460">Magnesium</keyword>
<keyword id="KW-0479">Metal-binding</keyword>
<keyword id="KW-1185">Reference proteome</keyword>
<keyword id="KW-0859">Xylose metabolism</keyword>
<proteinExistence type="inferred from homology"/>
<organism>
    <name type="scientific">Geobacillus kaustophilus (strain HTA426)</name>
    <dbReference type="NCBI Taxonomy" id="235909"/>
    <lineage>
        <taxon>Bacteria</taxon>
        <taxon>Bacillati</taxon>
        <taxon>Bacillota</taxon>
        <taxon>Bacilli</taxon>
        <taxon>Bacillales</taxon>
        <taxon>Anoxybacillaceae</taxon>
        <taxon>Geobacillus</taxon>
        <taxon>Geobacillus thermoleovorans group</taxon>
    </lineage>
</organism>
<accession>Q5KYS6</accession>
<protein>
    <recommendedName>
        <fullName evidence="1">Xylose isomerase</fullName>
        <ecNumber evidence="1">5.3.1.5</ecNumber>
    </recommendedName>
</protein>
<name>XYLA_GEOKA</name>